<sequence length="250" mass="26729">MLRILLSNDDGITAPGIQTLAAALREFAQVQIVAPDRNRSGSSNALTLDSALRITTLSNGDIAVQQGTPTDCVYLGVNALMRPRPDIVVSGINAGPNLGDDVIYSGTVAAAMEGRHLGFPALAVSLNGQQHYATAAAVTCRILRALQHKPLRTGKILNINIPDLPLSEIKGIRVTRCGSRHPAEQVFCQQDPRGQDLYWIGPPGEKFDVAEDTDFAAVEQGYVSITPLQVDLTAYGAQDVVENWLASMAD</sequence>
<gene>
    <name evidence="1" type="primary">surE</name>
    <name type="ordered locus">YE0772</name>
</gene>
<accession>A1JJT7</accession>
<name>SURE_YERE8</name>
<reference key="1">
    <citation type="journal article" date="2006" name="PLoS Genet.">
        <title>The complete genome sequence and comparative genome analysis of the high pathogenicity Yersinia enterocolitica strain 8081.</title>
        <authorList>
            <person name="Thomson N.R."/>
            <person name="Howard S."/>
            <person name="Wren B.W."/>
            <person name="Holden M.T.G."/>
            <person name="Crossman L."/>
            <person name="Challis G.L."/>
            <person name="Churcher C."/>
            <person name="Mungall K."/>
            <person name="Brooks K."/>
            <person name="Chillingworth T."/>
            <person name="Feltwell T."/>
            <person name="Abdellah Z."/>
            <person name="Hauser H."/>
            <person name="Jagels K."/>
            <person name="Maddison M."/>
            <person name="Moule S."/>
            <person name="Sanders M."/>
            <person name="Whitehead S."/>
            <person name="Quail M.A."/>
            <person name="Dougan G."/>
            <person name="Parkhill J."/>
            <person name="Prentice M.B."/>
        </authorList>
    </citation>
    <scope>NUCLEOTIDE SEQUENCE [LARGE SCALE GENOMIC DNA]</scope>
    <source>
        <strain>NCTC 13174 / 8081</strain>
    </source>
</reference>
<proteinExistence type="inferred from homology"/>
<comment type="function">
    <text evidence="1">Nucleotidase with a broad substrate specificity as it can dephosphorylate various ribo- and deoxyribonucleoside 5'-monophosphates and ribonucleoside 3'-monophosphates with highest affinity to 3'-AMP. Also hydrolyzes polyphosphate (exopolyphosphatase activity) with the preference for short-chain-length substrates (P20-25). Might be involved in the regulation of dNTP and NTP pools, and in the turnover of 3'-mononucleotides produced by numerous intracellular RNases (T1, T2, and F) during the degradation of various RNAs.</text>
</comment>
<comment type="catalytic activity">
    <reaction evidence="1">
        <text>a ribonucleoside 5'-phosphate + H2O = a ribonucleoside + phosphate</text>
        <dbReference type="Rhea" id="RHEA:12484"/>
        <dbReference type="ChEBI" id="CHEBI:15377"/>
        <dbReference type="ChEBI" id="CHEBI:18254"/>
        <dbReference type="ChEBI" id="CHEBI:43474"/>
        <dbReference type="ChEBI" id="CHEBI:58043"/>
        <dbReference type="EC" id="3.1.3.5"/>
    </reaction>
</comment>
<comment type="catalytic activity">
    <reaction evidence="1">
        <text>a ribonucleoside 3'-phosphate + H2O = a ribonucleoside + phosphate</text>
        <dbReference type="Rhea" id="RHEA:10144"/>
        <dbReference type="ChEBI" id="CHEBI:13197"/>
        <dbReference type="ChEBI" id="CHEBI:15377"/>
        <dbReference type="ChEBI" id="CHEBI:18254"/>
        <dbReference type="ChEBI" id="CHEBI:43474"/>
        <dbReference type="EC" id="3.1.3.6"/>
    </reaction>
</comment>
<comment type="catalytic activity">
    <reaction evidence="1">
        <text>[phosphate](n) + H2O = [phosphate](n-1) + phosphate + H(+)</text>
        <dbReference type="Rhea" id="RHEA:21528"/>
        <dbReference type="Rhea" id="RHEA-COMP:9859"/>
        <dbReference type="Rhea" id="RHEA-COMP:14279"/>
        <dbReference type="ChEBI" id="CHEBI:15377"/>
        <dbReference type="ChEBI" id="CHEBI:15378"/>
        <dbReference type="ChEBI" id="CHEBI:16838"/>
        <dbReference type="ChEBI" id="CHEBI:43474"/>
        <dbReference type="EC" id="3.6.1.11"/>
    </reaction>
</comment>
<comment type="cofactor">
    <cofactor evidence="1">
        <name>a divalent metal cation</name>
        <dbReference type="ChEBI" id="CHEBI:60240"/>
    </cofactor>
    <text evidence="1">Binds 1 divalent metal cation per subunit.</text>
</comment>
<comment type="subcellular location">
    <subcellularLocation>
        <location evidence="1">Cytoplasm</location>
    </subcellularLocation>
</comment>
<comment type="similarity">
    <text evidence="1">Belongs to the SurE nucleotidase family.</text>
</comment>
<feature type="chain" id="PRO_1000007802" description="5'/3'-nucleotidase SurE">
    <location>
        <begin position="1"/>
        <end position="250"/>
    </location>
</feature>
<feature type="binding site" evidence="1">
    <location>
        <position position="9"/>
    </location>
    <ligand>
        <name>a divalent metal cation</name>
        <dbReference type="ChEBI" id="CHEBI:60240"/>
    </ligand>
</feature>
<feature type="binding site" evidence="1">
    <location>
        <position position="10"/>
    </location>
    <ligand>
        <name>a divalent metal cation</name>
        <dbReference type="ChEBI" id="CHEBI:60240"/>
    </ligand>
</feature>
<feature type="binding site" evidence="1">
    <location>
        <position position="40"/>
    </location>
    <ligand>
        <name>a divalent metal cation</name>
        <dbReference type="ChEBI" id="CHEBI:60240"/>
    </ligand>
</feature>
<feature type="binding site" evidence="1">
    <location>
        <position position="93"/>
    </location>
    <ligand>
        <name>a divalent metal cation</name>
        <dbReference type="ChEBI" id="CHEBI:60240"/>
    </ligand>
</feature>
<dbReference type="EC" id="3.1.3.5" evidence="1"/>
<dbReference type="EC" id="3.1.3.6" evidence="1"/>
<dbReference type="EC" id="3.6.1.11" evidence="1"/>
<dbReference type="EMBL" id="AM286415">
    <property type="protein sequence ID" value="CAL10874.1"/>
    <property type="molecule type" value="Genomic_DNA"/>
</dbReference>
<dbReference type="RefSeq" id="WP_011815612.1">
    <property type="nucleotide sequence ID" value="NC_008800.1"/>
</dbReference>
<dbReference type="RefSeq" id="YP_001005113.1">
    <property type="nucleotide sequence ID" value="NC_008800.1"/>
</dbReference>
<dbReference type="SMR" id="A1JJT7"/>
<dbReference type="KEGG" id="yen:YE0772"/>
<dbReference type="PATRIC" id="fig|393305.7.peg.865"/>
<dbReference type="eggNOG" id="COG0496">
    <property type="taxonomic scope" value="Bacteria"/>
</dbReference>
<dbReference type="HOGENOM" id="CLU_045192_1_2_6"/>
<dbReference type="OrthoDB" id="9780815at2"/>
<dbReference type="Proteomes" id="UP000000642">
    <property type="component" value="Chromosome"/>
</dbReference>
<dbReference type="GO" id="GO:0005737">
    <property type="term" value="C:cytoplasm"/>
    <property type="evidence" value="ECO:0007669"/>
    <property type="project" value="UniProtKB-SubCell"/>
</dbReference>
<dbReference type="GO" id="GO:0008254">
    <property type="term" value="F:3'-nucleotidase activity"/>
    <property type="evidence" value="ECO:0007669"/>
    <property type="project" value="UniProtKB-UniRule"/>
</dbReference>
<dbReference type="GO" id="GO:0008253">
    <property type="term" value="F:5'-nucleotidase activity"/>
    <property type="evidence" value="ECO:0007669"/>
    <property type="project" value="UniProtKB-UniRule"/>
</dbReference>
<dbReference type="GO" id="GO:0004309">
    <property type="term" value="F:exopolyphosphatase activity"/>
    <property type="evidence" value="ECO:0007669"/>
    <property type="project" value="UniProtKB-UniRule"/>
</dbReference>
<dbReference type="GO" id="GO:0046872">
    <property type="term" value="F:metal ion binding"/>
    <property type="evidence" value="ECO:0007669"/>
    <property type="project" value="UniProtKB-UniRule"/>
</dbReference>
<dbReference type="GO" id="GO:0000166">
    <property type="term" value="F:nucleotide binding"/>
    <property type="evidence" value="ECO:0007669"/>
    <property type="project" value="UniProtKB-KW"/>
</dbReference>
<dbReference type="FunFam" id="3.40.1210.10:FF:000001">
    <property type="entry name" value="5'/3'-nucleotidase SurE"/>
    <property type="match status" value="1"/>
</dbReference>
<dbReference type="Gene3D" id="3.40.1210.10">
    <property type="entry name" value="Survival protein SurE-like phosphatase/nucleotidase"/>
    <property type="match status" value="1"/>
</dbReference>
<dbReference type="HAMAP" id="MF_00060">
    <property type="entry name" value="SurE"/>
    <property type="match status" value="1"/>
</dbReference>
<dbReference type="InterPro" id="IPR030048">
    <property type="entry name" value="SurE"/>
</dbReference>
<dbReference type="InterPro" id="IPR002828">
    <property type="entry name" value="SurE-like_Pase/nucleotidase"/>
</dbReference>
<dbReference type="InterPro" id="IPR036523">
    <property type="entry name" value="SurE-like_sf"/>
</dbReference>
<dbReference type="NCBIfam" id="NF001488">
    <property type="entry name" value="PRK00346.1-1"/>
    <property type="match status" value="1"/>
</dbReference>
<dbReference type="NCBIfam" id="NF001489">
    <property type="entry name" value="PRK00346.1-3"/>
    <property type="match status" value="1"/>
</dbReference>
<dbReference type="NCBIfam" id="NF001490">
    <property type="entry name" value="PRK00346.1-4"/>
    <property type="match status" value="1"/>
</dbReference>
<dbReference type="NCBIfam" id="TIGR00087">
    <property type="entry name" value="surE"/>
    <property type="match status" value="1"/>
</dbReference>
<dbReference type="PANTHER" id="PTHR30457">
    <property type="entry name" value="5'-NUCLEOTIDASE SURE"/>
    <property type="match status" value="1"/>
</dbReference>
<dbReference type="PANTHER" id="PTHR30457:SF12">
    <property type="entry name" value="5'_3'-NUCLEOTIDASE SURE"/>
    <property type="match status" value="1"/>
</dbReference>
<dbReference type="Pfam" id="PF01975">
    <property type="entry name" value="SurE"/>
    <property type="match status" value="1"/>
</dbReference>
<dbReference type="SUPFAM" id="SSF64167">
    <property type="entry name" value="SurE-like"/>
    <property type="match status" value="1"/>
</dbReference>
<keyword id="KW-0963">Cytoplasm</keyword>
<keyword id="KW-0378">Hydrolase</keyword>
<keyword id="KW-0479">Metal-binding</keyword>
<keyword id="KW-0547">Nucleotide-binding</keyword>
<evidence type="ECO:0000255" key="1">
    <source>
        <dbReference type="HAMAP-Rule" id="MF_00060"/>
    </source>
</evidence>
<protein>
    <recommendedName>
        <fullName evidence="1">5'/3'-nucleotidase SurE</fullName>
        <ecNumber evidence="1">3.1.3.5</ecNumber>
        <ecNumber evidence="1">3.1.3.6</ecNumber>
    </recommendedName>
    <alternativeName>
        <fullName evidence="1">Exopolyphosphatase</fullName>
        <ecNumber evidence="1">3.6.1.11</ecNumber>
    </alternativeName>
    <alternativeName>
        <fullName evidence="1">Nucleoside monophosphate phosphohydrolase</fullName>
    </alternativeName>
</protein>
<organism>
    <name type="scientific">Yersinia enterocolitica serotype O:8 / biotype 1B (strain NCTC 13174 / 8081)</name>
    <dbReference type="NCBI Taxonomy" id="393305"/>
    <lineage>
        <taxon>Bacteria</taxon>
        <taxon>Pseudomonadati</taxon>
        <taxon>Pseudomonadota</taxon>
        <taxon>Gammaproteobacteria</taxon>
        <taxon>Enterobacterales</taxon>
        <taxon>Yersiniaceae</taxon>
        <taxon>Yersinia</taxon>
    </lineage>
</organism>